<dbReference type="EC" id="2.7.7.18" evidence="1"/>
<dbReference type="EMBL" id="CP000480">
    <property type="protein sequence ID" value="ABK71019.1"/>
    <property type="status" value="ALT_INIT"/>
    <property type="molecule type" value="Genomic_DNA"/>
</dbReference>
<dbReference type="EMBL" id="CP001663">
    <property type="protein sequence ID" value="AFP40923.1"/>
    <property type="molecule type" value="Genomic_DNA"/>
</dbReference>
<dbReference type="RefSeq" id="WP_003895960.1">
    <property type="nucleotide sequence ID" value="NC_018289.1"/>
</dbReference>
<dbReference type="RefSeq" id="YP_888850.1">
    <property type="nucleotide sequence ID" value="NC_008596.1"/>
</dbReference>
<dbReference type="SMR" id="A0R112"/>
<dbReference type="STRING" id="246196.MSMEG_4581"/>
<dbReference type="PaxDb" id="246196-MSMEI_4469"/>
<dbReference type="KEGG" id="msb:LJ00_22670"/>
<dbReference type="KEGG" id="msg:MSMEI_4469"/>
<dbReference type="KEGG" id="msm:MSMEG_4581"/>
<dbReference type="PATRIC" id="fig|246196.19.peg.4484"/>
<dbReference type="eggNOG" id="COG1057">
    <property type="taxonomic scope" value="Bacteria"/>
</dbReference>
<dbReference type="OrthoDB" id="5295945at2"/>
<dbReference type="UniPathway" id="UPA00253">
    <property type="reaction ID" value="UER00332"/>
</dbReference>
<dbReference type="Proteomes" id="UP000000757">
    <property type="component" value="Chromosome"/>
</dbReference>
<dbReference type="Proteomes" id="UP000006158">
    <property type="component" value="Chromosome"/>
</dbReference>
<dbReference type="GO" id="GO:0005524">
    <property type="term" value="F:ATP binding"/>
    <property type="evidence" value="ECO:0007669"/>
    <property type="project" value="UniProtKB-KW"/>
</dbReference>
<dbReference type="GO" id="GO:0004515">
    <property type="term" value="F:nicotinate-nucleotide adenylyltransferase activity"/>
    <property type="evidence" value="ECO:0007669"/>
    <property type="project" value="UniProtKB-UniRule"/>
</dbReference>
<dbReference type="GO" id="GO:0009435">
    <property type="term" value="P:NAD biosynthetic process"/>
    <property type="evidence" value="ECO:0007669"/>
    <property type="project" value="UniProtKB-UniRule"/>
</dbReference>
<dbReference type="CDD" id="cd02165">
    <property type="entry name" value="NMNAT"/>
    <property type="match status" value="1"/>
</dbReference>
<dbReference type="FunFam" id="3.40.50.620:FF:000039">
    <property type="entry name" value="Probable nicotinate-nucleotide adenylyltransferase"/>
    <property type="match status" value="1"/>
</dbReference>
<dbReference type="Gene3D" id="3.40.50.620">
    <property type="entry name" value="HUPs"/>
    <property type="match status" value="1"/>
</dbReference>
<dbReference type="HAMAP" id="MF_00244">
    <property type="entry name" value="NaMN_adenylyltr"/>
    <property type="match status" value="1"/>
</dbReference>
<dbReference type="InterPro" id="IPR004821">
    <property type="entry name" value="Cyt_trans-like"/>
</dbReference>
<dbReference type="InterPro" id="IPR005248">
    <property type="entry name" value="NadD/NMNAT"/>
</dbReference>
<dbReference type="InterPro" id="IPR014729">
    <property type="entry name" value="Rossmann-like_a/b/a_fold"/>
</dbReference>
<dbReference type="NCBIfam" id="TIGR00125">
    <property type="entry name" value="cyt_tran_rel"/>
    <property type="match status" value="1"/>
</dbReference>
<dbReference type="NCBIfam" id="TIGR00482">
    <property type="entry name" value="nicotinate (nicotinamide) nucleotide adenylyltransferase"/>
    <property type="match status" value="1"/>
</dbReference>
<dbReference type="NCBIfam" id="NF000840">
    <property type="entry name" value="PRK00071.1-3"/>
    <property type="match status" value="1"/>
</dbReference>
<dbReference type="PANTHER" id="PTHR39321">
    <property type="entry name" value="NICOTINATE-NUCLEOTIDE ADENYLYLTRANSFERASE-RELATED"/>
    <property type="match status" value="1"/>
</dbReference>
<dbReference type="PANTHER" id="PTHR39321:SF3">
    <property type="entry name" value="PHOSPHOPANTETHEINE ADENYLYLTRANSFERASE"/>
    <property type="match status" value="1"/>
</dbReference>
<dbReference type="Pfam" id="PF01467">
    <property type="entry name" value="CTP_transf_like"/>
    <property type="match status" value="1"/>
</dbReference>
<dbReference type="SUPFAM" id="SSF52374">
    <property type="entry name" value="Nucleotidylyl transferase"/>
    <property type="match status" value="1"/>
</dbReference>
<feature type="chain" id="PRO_0000336711" description="Probable nicotinate-nucleotide adenylyltransferase">
    <location>
        <begin position="1"/>
        <end position="213"/>
    </location>
</feature>
<feature type="region of interest" description="Disordered" evidence="2">
    <location>
        <begin position="194"/>
        <end position="213"/>
    </location>
</feature>
<feature type="compositionally biased region" description="Basic and acidic residues" evidence="2">
    <location>
        <begin position="200"/>
        <end position="213"/>
    </location>
</feature>
<protein>
    <recommendedName>
        <fullName evidence="1">Probable nicotinate-nucleotide adenylyltransferase</fullName>
        <ecNumber evidence="1">2.7.7.18</ecNumber>
    </recommendedName>
    <alternativeName>
        <fullName evidence="1">Deamido-NAD(+) diphosphorylase</fullName>
    </alternativeName>
    <alternativeName>
        <fullName evidence="1">Deamido-NAD(+) pyrophosphorylase</fullName>
    </alternativeName>
    <alternativeName>
        <fullName evidence="1">Nicotinate mononucleotide adenylyltransferase</fullName>
        <shortName evidence="1">NaMN adenylyltransferase</shortName>
    </alternativeName>
</protein>
<keyword id="KW-0067">ATP-binding</keyword>
<keyword id="KW-0520">NAD</keyword>
<keyword id="KW-0547">Nucleotide-binding</keyword>
<keyword id="KW-0548">Nucleotidyltransferase</keyword>
<keyword id="KW-0662">Pyridine nucleotide biosynthesis</keyword>
<keyword id="KW-1185">Reference proteome</keyword>
<keyword id="KW-0808">Transferase</keyword>
<gene>
    <name evidence="1" type="primary">nadD</name>
    <name type="ordered locus">MSMEG_4581</name>
    <name type="ordered locus">MSMEI_4469</name>
</gene>
<evidence type="ECO:0000255" key="1">
    <source>
        <dbReference type="HAMAP-Rule" id="MF_00244"/>
    </source>
</evidence>
<evidence type="ECO:0000256" key="2">
    <source>
        <dbReference type="SAM" id="MobiDB-lite"/>
    </source>
</evidence>
<evidence type="ECO:0000305" key="3"/>
<organism>
    <name type="scientific">Mycolicibacterium smegmatis (strain ATCC 700084 / mc(2)155)</name>
    <name type="common">Mycobacterium smegmatis</name>
    <dbReference type="NCBI Taxonomy" id="246196"/>
    <lineage>
        <taxon>Bacteria</taxon>
        <taxon>Bacillati</taxon>
        <taxon>Actinomycetota</taxon>
        <taxon>Actinomycetes</taxon>
        <taxon>Mycobacteriales</taxon>
        <taxon>Mycobacteriaceae</taxon>
        <taxon>Mycolicibacterium</taxon>
    </lineage>
</organism>
<proteinExistence type="inferred from homology"/>
<comment type="function">
    <text evidence="1">Catalyzes the reversible adenylation of nicotinate mononucleotide (NaMN) to nicotinic acid adenine dinucleotide (NaAD).</text>
</comment>
<comment type="catalytic activity">
    <reaction evidence="1">
        <text>nicotinate beta-D-ribonucleotide + ATP + H(+) = deamido-NAD(+) + diphosphate</text>
        <dbReference type="Rhea" id="RHEA:22860"/>
        <dbReference type="ChEBI" id="CHEBI:15378"/>
        <dbReference type="ChEBI" id="CHEBI:30616"/>
        <dbReference type="ChEBI" id="CHEBI:33019"/>
        <dbReference type="ChEBI" id="CHEBI:57502"/>
        <dbReference type="ChEBI" id="CHEBI:58437"/>
        <dbReference type="EC" id="2.7.7.18"/>
    </reaction>
</comment>
<comment type="pathway">
    <text evidence="1">Cofactor biosynthesis; NAD(+) biosynthesis; deamido-NAD(+) from nicotinate D-ribonucleotide: step 1/1.</text>
</comment>
<comment type="similarity">
    <text evidence="1">Belongs to the NadD family.</text>
</comment>
<comment type="sequence caution" evidence="3">
    <conflict type="erroneous initiation">
        <sequence resource="EMBL-CDS" id="ABK71019"/>
    </conflict>
</comment>
<name>NADD_MYCS2</name>
<accession>A0R112</accession>
<accession>I7FQD8</accession>
<reference key="1">
    <citation type="submission" date="2006-10" db="EMBL/GenBank/DDBJ databases">
        <authorList>
            <person name="Fleischmann R.D."/>
            <person name="Dodson R.J."/>
            <person name="Haft D.H."/>
            <person name="Merkel J.S."/>
            <person name="Nelson W.C."/>
            <person name="Fraser C.M."/>
        </authorList>
    </citation>
    <scope>NUCLEOTIDE SEQUENCE [LARGE SCALE GENOMIC DNA]</scope>
    <source>
        <strain>ATCC 700084 / mc(2)155</strain>
    </source>
</reference>
<reference key="2">
    <citation type="journal article" date="2007" name="Genome Biol.">
        <title>Interrupted coding sequences in Mycobacterium smegmatis: authentic mutations or sequencing errors?</title>
        <authorList>
            <person name="Deshayes C."/>
            <person name="Perrodou E."/>
            <person name="Gallien S."/>
            <person name="Euphrasie D."/>
            <person name="Schaeffer C."/>
            <person name="Van-Dorsselaer A."/>
            <person name="Poch O."/>
            <person name="Lecompte O."/>
            <person name="Reyrat J.-M."/>
        </authorList>
    </citation>
    <scope>NUCLEOTIDE SEQUENCE [LARGE SCALE GENOMIC DNA]</scope>
    <source>
        <strain>ATCC 700084 / mc(2)155</strain>
    </source>
</reference>
<reference key="3">
    <citation type="journal article" date="2009" name="Genome Res.">
        <title>Ortho-proteogenomics: multiple proteomes investigation through orthology and a new MS-based protocol.</title>
        <authorList>
            <person name="Gallien S."/>
            <person name="Perrodou E."/>
            <person name="Carapito C."/>
            <person name="Deshayes C."/>
            <person name="Reyrat J.-M."/>
            <person name="Van Dorsselaer A."/>
            <person name="Poch O."/>
            <person name="Schaeffer C."/>
            <person name="Lecompte O."/>
        </authorList>
    </citation>
    <scope>NUCLEOTIDE SEQUENCE [LARGE SCALE GENOMIC DNA]</scope>
    <source>
        <strain>ATCC 700084 / mc(2)155</strain>
    </source>
</reference>
<sequence>MGGTFDPIHNGHLVAASEVADLFDLDEVVFVPTGEPWQKHHRRVSAAEDRYLMTVIATASNPRFSVSRVDIDRGGPTYTKDTLRDLRDLNTDADLYFITGADALGSILSWQNWEDMFSMAKFVGVSRPGYELDGKHILDAMRELPPDALSLVEVPALAISSSDCRKRAEEQRPIWYLVPDGVVQYVAKRGLYTRKPNNGEAKDGDVKDEEAVR</sequence>